<feature type="peptide" id="PRO_0000444565" description="Panurgin 1" evidence="1">
    <location>
        <begin position="1"/>
        <end position="12"/>
    </location>
</feature>
<feature type="modified residue" description="Lysine amide" evidence="1">
    <location>
        <position position="12"/>
    </location>
</feature>
<feature type="mutagenesis site" description="Virtually complete loss of antimicrobial and hemolytic activity." evidence="1">
    <original>W</original>
    <variation>K</variation>
    <location>
        <position position="3"/>
    </location>
</feature>
<feature type="mutagenesis site" description="Complete loss or severe reduction of antimicrobial activity and loss of hemolytic activity; when associated with A-10 and A-11." evidence="1">
    <original>I</original>
    <variation>A</variation>
    <location>
        <position position="6"/>
    </location>
</feature>
<feature type="mutagenesis site" description="Complete loss or severe reduction of antimicrobial activity. Loss of hemolytic activity." evidence="1">
    <original>I</original>
    <variation>K</variation>
    <location>
        <position position="6"/>
    </location>
</feature>
<feature type="mutagenesis site" description="Increased hemolytic activity; when associated with L-10 and L-11." evidence="1">
    <original>I</original>
    <variation>L</variation>
    <location>
        <position position="6"/>
    </location>
</feature>
<feature type="mutagenesis site" description="Complete loss or severe reduction of antimicrobial activity. Loss of hemolytic activity." evidence="1">
    <original>L</original>
    <variation>K</variation>
    <location>
        <position position="7"/>
    </location>
</feature>
<feature type="mutagenesis site" description="Complete loss or severe reduction of antimicrobial activity and loss of hemolytic activity; when associated with A-6 and A-11." evidence="1">
    <original>I</original>
    <variation>A</variation>
    <location>
        <position position="10"/>
    </location>
</feature>
<feature type="mutagenesis site" description="Complete loss or severe reduction of antimicrobial activity. Loss of hemolytic activity." evidence="1">
    <original>I</original>
    <variation>K</variation>
    <location>
        <position position="10"/>
    </location>
</feature>
<feature type="mutagenesis site" description="Increased hemolytic activity; when associated with L-6 and L-11." evidence="1">
    <original>I</original>
    <variation>L</variation>
    <location>
        <position position="10"/>
    </location>
</feature>
<feature type="mutagenesis site" description="Complete loss or severe reduction of antimicrobial activity and loss of hemolytic activity; when associated with A-6 and A-10." evidence="1">
    <original>I</original>
    <variation>A</variation>
    <location>
        <position position="11"/>
    </location>
</feature>
<feature type="mutagenesis site" description="Severe reduction of antimicrobial activity. Loss of hemolytic activity." evidence="1">
    <original>I</original>
    <variation>K</variation>
    <location>
        <position position="11"/>
    </location>
</feature>
<feature type="mutagenesis site" description="Increased hemolytic activity; when associated with L-6 and L-10." evidence="1">
    <original>I</original>
    <variation>L</variation>
    <location>
        <position position="11"/>
    </location>
</feature>
<sequence length="12" mass="1406">LNWGAILKHIIK</sequence>
<dbReference type="GO" id="GO:0005576">
    <property type="term" value="C:extracellular region"/>
    <property type="evidence" value="ECO:0000314"/>
    <property type="project" value="UniProtKB"/>
</dbReference>
<dbReference type="GO" id="GO:0016020">
    <property type="term" value="C:membrane"/>
    <property type="evidence" value="ECO:0007669"/>
    <property type="project" value="UniProtKB-KW"/>
</dbReference>
<dbReference type="GO" id="GO:0044218">
    <property type="term" value="C:other organism cell membrane"/>
    <property type="evidence" value="ECO:0007669"/>
    <property type="project" value="UniProtKB-KW"/>
</dbReference>
<dbReference type="GO" id="GO:0051715">
    <property type="term" value="P:cytolysis in another organism"/>
    <property type="evidence" value="ECO:0000314"/>
    <property type="project" value="UniProtKB"/>
</dbReference>
<dbReference type="GO" id="GO:0050832">
    <property type="term" value="P:defense response to fungus"/>
    <property type="evidence" value="ECO:0000314"/>
    <property type="project" value="UniProtKB"/>
</dbReference>
<dbReference type="GO" id="GO:0050829">
    <property type="term" value="P:defense response to Gram-negative bacterium"/>
    <property type="evidence" value="ECO:0000314"/>
    <property type="project" value="UniProtKB"/>
</dbReference>
<dbReference type="GO" id="GO:0050830">
    <property type="term" value="P:defense response to Gram-positive bacterium"/>
    <property type="evidence" value="ECO:0000314"/>
    <property type="project" value="UniProtKB"/>
</dbReference>
<dbReference type="GO" id="GO:0051673">
    <property type="term" value="P:disruption of plasma membrane integrity in another organism"/>
    <property type="evidence" value="ECO:0000314"/>
    <property type="project" value="UniProtKB"/>
</dbReference>
<dbReference type="GO" id="GO:0031640">
    <property type="term" value="P:killing of cells of another organism"/>
    <property type="evidence" value="ECO:0000314"/>
    <property type="project" value="UniProtKB"/>
</dbReference>
<evidence type="ECO:0000269" key="1">
    <source>
    </source>
</evidence>
<evidence type="ECO:0000303" key="2">
    <source>
    </source>
</evidence>
<evidence type="ECO:0000305" key="3"/>
<evidence type="ECO:0000305" key="4">
    <source>
    </source>
</evidence>
<organism evidence="2">
    <name type="scientific">Panurgus calcaratus</name>
    <name type="common">Solitary bee</name>
    <dbReference type="NCBI Taxonomy" id="156354"/>
    <lineage>
        <taxon>Eukaryota</taxon>
        <taxon>Metazoa</taxon>
        <taxon>Ecdysozoa</taxon>
        <taxon>Arthropoda</taxon>
        <taxon>Hexapoda</taxon>
        <taxon>Insecta</taxon>
        <taxon>Pterygota</taxon>
        <taxon>Neoptera</taxon>
        <taxon>Endopterygota</taxon>
        <taxon>Hymenoptera</taxon>
        <taxon>Apocrita</taxon>
        <taxon>Aculeata</taxon>
        <taxon>Apoidea</taxon>
        <taxon>Anthophila</taxon>
        <taxon>Andrenidae</taxon>
        <taxon>Panurginae</taxon>
        <taxon>Panurgini</taxon>
        <taxon>Panurgus</taxon>
    </lineage>
</organism>
<name>PNG1_PANCL</name>
<accession>C0HL84</accession>
<proteinExistence type="evidence at protein level"/>
<protein>
    <recommendedName>
        <fullName evidence="2">Panurgin 1</fullName>
        <shortName evidence="2">PNG-1</shortName>
    </recommendedName>
</protein>
<comment type="function">
    <text evidence="1">Antimicrobial peptide active against Gram-positive bacteria M.luteus (MIC=1.5 uM), B.subtilis (MIC=1.3 uM) and S.aureus (MIC=10.6 uM), against Gram-negative bacteria E.coli (MIC=3.7 uM) and P.aeruginosa (MIC=51.7 uM) as well as against yeast C.albicans (MIC=7.3 uM). Has weak hemolytic activity against human erythrocytes. Probably acts by disrupting membranes of target cells.</text>
</comment>
<comment type="subcellular location">
    <subcellularLocation>
        <location evidence="4">Target cell membrane</location>
    </subcellularLocation>
    <subcellularLocation>
        <location evidence="1">Secreted</location>
    </subcellularLocation>
</comment>
<comment type="mass spectrometry" mass="1403.7" method="Electrospray" evidence="1"/>
<reference evidence="3" key="1">
    <citation type="journal article" date="2013" name="Amino Acids">
        <title>Panurgines, novel antimicrobial peptides from the venom of communal bee Panurgus calcaratus (Hymenoptera: Andrenidae).</title>
        <authorList>
            <person name="Cujova S."/>
            <person name="Slaninova J."/>
            <person name="Monincova L."/>
            <person name="Fucik V."/>
            <person name="Bednarova L."/>
            <person name="Stokrova J."/>
            <person name="Hovorka O."/>
            <person name="Voburka Z."/>
            <person name="Straka J."/>
            <person name="Cerovsky V."/>
        </authorList>
    </citation>
    <scope>PROTEIN SEQUENCE</scope>
    <scope>FUNCTION</scope>
    <scope>MASS SPECTROMETRY</scope>
    <scope>AMIDATION AT LYS-12</scope>
    <scope>MUTAGENESIS OF TRP-3; ILE-6; LEU-7; ILE-10 AND ILE-11</scope>
    <source>
        <tissue evidence="2">Venom</tissue>
    </source>
</reference>
<keyword id="KW-0027">Amidation</keyword>
<keyword id="KW-0044">Antibiotic</keyword>
<keyword id="KW-0929">Antimicrobial</keyword>
<keyword id="KW-0204">Cytolysis</keyword>
<keyword id="KW-0903">Direct protein sequencing</keyword>
<keyword id="KW-0295">Fungicide</keyword>
<keyword id="KW-0354">Hemolysis</keyword>
<keyword id="KW-0472">Membrane</keyword>
<keyword id="KW-0964">Secreted</keyword>
<keyword id="KW-1052">Target cell membrane</keyword>
<keyword id="KW-1053">Target membrane</keyword>